<gene>
    <name evidence="1" type="primary">sfsA</name>
    <name type="ordered locus">Atu1605</name>
    <name type="ORF">AGR_C_2956</name>
</gene>
<proteinExistence type="inferred from homology"/>
<accession>P58429</accession>
<name>SFSA_AGRFC</name>
<sequence length="239" mass="26709">MLFTPPLIPATLISRYKRFLFDAVLEDGTAITGSCPNTGSMRGLTTPGSRIWLSEHDSPTRKYRHMFEMVEADGTVVGINTGMPNRLAEEAILNGRIPELAGYSTIRREQKYGRNSRIDFLLSEPGRPDAYVEVKNVHFMREKGLAEFPDTATKRGAKHLEELGDAAEAGYRSVMLYLIQRDDCERMRICADLDPIYALAFQRAMARGVEAYAVKCAVSPTQISVSGTVKMDEWRPAVL</sequence>
<evidence type="ECO:0000255" key="1">
    <source>
        <dbReference type="HAMAP-Rule" id="MF_00095"/>
    </source>
</evidence>
<protein>
    <recommendedName>
        <fullName evidence="1">Sugar fermentation stimulation protein homolog</fullName>
    </recommendedName>
</protein>
<feature type="chain" id="PRO_0000152266" description="Sugar fermentation stimulation protein homolog">
    <location>
        <begin position="1"/>
        <end position="239"/>
    </location>
</feature>
<reference key="1">
    <citation type="journal article" date="2001" name="Science">
        <title>The genome of the natural genetic engineer Agrobacterium tumefaciens C58.</title>
        <authorList>
            <person name="Wood D.W."/>
            <person name="Setubal J.C."/>
            <person name="Kaul R."/>
            <person name="Monks D.E."/>
            <person name="Kitajima J.P."/>
            <person name="Okura V.K."/>
            <person name="Zhou Y."/>
            <person name="Chen L."/>
            <person name="Wood G.E."/>
            <person name="Almeida N.F. Jr."/>
            <person name="Woo L."/>
            <person name="Chen Y."/>
            <person name="Paulsen I.T."/>
            <person name="Eisen J.A."/>
            <person name="Karp P.D."/>
            <person name="Bovee D. Sr."/>
            <person name="Chapman P."/>
            <person name="Clendenning J."/>
            <person name="Deatherage G."/>
            <person name="Gillet W."/>
            <person name="Grant C."/>
            <person name="Kutyavin T."/>
            <person name="Levy R."/>
            <person name="Li M.-J."/>
            <person name="McClelland E."/>
            <person name="Palmieri A."/>
            <person name="Raymond C."/>
            <person name="Rouse G."/>
            <person name="Saenphimmachak C."/>
            <person name="Wu Z."/>
            <person name="Romero P."/>
            <person name="Gordon D."/>
            <person name="Zhang S."/>
            <person name="Yoo H."/>
            <person name="Tao Y."/>
            <person name="Biddle P."/>
            <person name="Jung M."/>
            <person name="Krespan W."/>
            <person name="Perry M."/>
            <person name="Gordon-Kamm B."/>
            <person name="Liao L."/>
            <person name="Kim S."/>
            <person name="Hendrick C."/>
            <person name="Zhao Z.-Y."/>
            <person name="Dolan M."/>
            <person name="Chumley F."/>
            <person name="Tingey S.V."/>
            <person name="Tomb J.-F."/>
            <person name="Gordon M.P."/>
            <person name="Olson M.V."/>
            <person name="Nester E.W."/>
        </authorList>
    </citation>
    <scope>NUCLEOTIDE SEQUENCE [LARGE SCALE GENOMIC DNA]</scope>
    <source>
        <strain>C58 / ATCC 33970</strain>
    </source>
</reference>
<reference key="2">
    <citation type="journal article" date="2001" name="Science">
        <title>Genome sequence of the plant pathogen and biotechnology agent Agrobacterium tumefaciens C58.</title>
        <authorList>
            <person name="Goodner B."/>
            <person name="Hinkle G."/>
            <person name="Gattung S."/>
            <person name="Miller N."/>
            <person name="Blanchard M."/>
            <person name="Qurollo B."/>
            <person name="Goldman B.S."/>
            <person name="Cao Y."/>
            <person name="Askenazi M."/>
            <person name="Halling C."/>
            <person name="Mullin L."/>
            <person name="Houmiel K."/>
            <person name="Gordon J."/>
            <person name="Vaudin M."/>
            <person name="Iartchouk O."/>
            <person name="Epp A."/>
            <person name="Liu F."/>
            <person name="Wollam C."/>
            <person name="Allinger M."/>
            <person name="Doughty D."/>
            <person name="Scott C."/>
            <person name="Lappas C."/>
            <person name="Markelz B."/>
            <person name="Flanagan C."/>
            <person name="Crowell C."/>
            <person name="Gurson J."/>
            <person name="Lomo C."/>
            <person name="Sear C."/>
            <person name="Strub G."/>
            <person name="Cielo C."/>
            <person name="Slater S."/>
        </authorList>
    </citation>
    <scope>NUCLEOTIDE SEQUENCE [LARGE SCALE GENOMIC DNA]</scope>
    <source>
        <strain>C58 / ATCC 33970</strain>
    </source>
</reference>
<keyword id="KW-1185">Reference proteome</keyword>
<organism>
    <name type="scientific">Agrobacterium fabrum (strain C58 / ATCC 33970)</name>
    <name type="common">Agrobacterium tumefaciens (strain C58)</name>
    <dbReference type="NCBI Taxonomy" id="176299"/>
    <lineage>
        <taxon>Bacteria</taxon>
        <taxon>Pseudomonadati</taxon>
        <taxon>Pseudomonadota</taxon>
        <taxon>Alphaproteobacteria</taxon>
        <taxon>Hyphomicrobiales</taxon>
        <taxon>Rhizobiaceae</taxon>
        <taxon>Rhizobium/Agrobacterium group</taxon>
        <taxon>Agrobacterium</taxon>
        <taxon>Agrobacterium tumefaciens complex</taxon>
    </lineage>
</organism>
<dbReference type="EMBL" id="AE007869">
    <property type="protein sequence ID" value="AAK87384.1"/>
    <property type="molecule type" value="Genomic_DNA"/>
</dbReference>
<dbReference type="PIR" id="AI2773">
    <property type="entry name" value="AI2773"/>
</dbReference>
<dbReference type="PIR" id="G97553">
    <property type="entry name" value="G97553"/>
</dbReference>
<dbReference type="RefSeq" id="NP_354599.1">
    <property type="nucleotide sequence ID" value="NC_003062.2"/>
</dbReference>
<dbReference type="RefSeq" id="WP_006316347.1">
    <property type="nucleotide sequence ID" value="NC_003062.2"/>
</dbReference>
<dbReference type="SMR" id="P58429"/>
<dbReference type="STRING" id="176299.Atu1605"/>
<dbReference type="EnsemblBacteria" id="AAK87384">
    <property type="protein sequence ID" value="AAK87384"/>
    <property type="gene ID" value="Atu1605"/>
</dbReference>
<dbReference type="GeneID" id="1133643"/>
<dbReference type="KEGG" id="atu:Atu1605"/>
<dbReference type="PATRIC" id="fig|176299.10.peg.1623"/>
<dbReference type="eggNOG" id="COG1489">
    <property type="taxonomic scope" value="Bacteria"/>
</dbReference>
<dbReference type="HOGENOM" id="CLU_052299_2_0_5"/>
<dbReference type="OrthoDB" id="9802365at2"/>
<dbReference type="PhylomeDB" id="P58429"/>
<dbReference type="BioCyc" id="AGRO:ATU1605-MONOMER"/>
<dbReference type="Proteomes" id="UP000000813">
    <property type="component" value="Chromosome circular"/>
</dbReference>
<dbReference type="GO" id="GO:0003677">
    <property type="term" value="F:DNA binding"/>
    <property type="evidence" value="ECO:0007669"/>
    <property type="project" value="InterPro"/>
</dbReference>
<dbReference type="CDD" id="cd22359">
    <property type="entry name" value="SfsA-like_bacterial"/>
    <property type="match status" value="1"/>
</dbReference>
<dbReference type="Gene3D" id="2.40.50.580">
    <property type="match status" value="1"/>
</dbReference>
<dbReference type="Gene3D" id="3.40.1350.60">
    <property type="match status" value="1"/>
</dbReference>
<dbReference type="HAMAP" id="MF_00095">
    <property type="entry name" value="SfsA"/>
    <property type="match status" value="1"/>
</dbReference>
<dbReference type="InterPro" id="IPR005224">
    <property type="entry name" value="SfsA"/>
</dbReference>
<dbReference type="InterPro" id="IPR040452">
    <property type="entry name" value="SfsA_C"/>
</dbReference>
<dbReference type="InterPro" id="IPR041465">
    <property type="entry name" value="SfsA_N"/>
</dbReference>
<dbReference type="NCBIfam" id="TIGR00230">
    <property type="entry name" value="sfsA"/>
    <property type="match status" value="1"/>
</dbReference>
<dbReference type="PANTHER" id="PTHR30545">
    <property type="entry name" value="SUGAR FERMENTATION STIMULATION PROTEIN A"/>
    <property type="match status" value="1"/>
</dbReference>
<dbReference type="PANTHER" id="PTHR30545:SF2">
    <property type="entry name" value="SUGAR FERMENTATION STIMULATION PROTEIN A"/>
    <property type="match status" value="1"/>
</dbReference>
<dbReference type="Pfam" id="PF03749">
    <property type="entry name" value="SfsA"/>
    <property type="match status" value="1"/>
</dbReference>
<dbReference type="Pfam" id="PF17746">
    <property type="entry name" value="SfsA_N"/>
    <property type="match status" value="1"/>
</dbReference>
<comment type="similarity">
    <text evidence="1">Belongs to the SfsA family.</text>
</comment>